<evidence type="ECO:0000250" key="1"/>
<evidence type="ECO:0000250" key="2">
    <source>
        <dbReference type="UniProtKB" id="P09884"/>
    </source>
</evidence>
<evidence type="ECO:0000250" key="3">
    <source>
        <dbReference type="UniProtKB" id="P20664"/>
    </source>
</evidence>
<evidence type="ECO:0000250" key="4">
    <source>
        <dbReference type="UniProtKB" id="Q14181"/>
    </source>
</evidence>
<evidence type="ECO:0000256" key="5">
    <source>
        <dbReference type="SAM" id="MobiDB-lite"/>
    </source>
</evidence>
<evidence type="ECO:0000305" key="6"/>
<comment type="function">
    <text evidence="2 3 4">Accessory subunit of the DNA polymerase alpha complex (also known as the alpha DNA polymerase-primase complex) which plays an essential role in the initiation of DNA synthesis (By similarity). During the S phase of the cell cycle, the DNA polymerase alpha complex (composed of a catalytic subunit POLA1, an accessory subunit POLA2 and two primase subunits, the catalytic subunit PRIM1 and the regulatory subunit PRIM2) is recruited to DNA at the replicative forks via direct interactions with MCM10 and WDHD1 (By similarity). The primase subunit of the polymerase alpha complex initiates DNA synthesis by oligomerising short RNA primers on both leading and lagging strands. These primers are initially extended by the polymerase alpha catalytic subunit and subsequently transferred to polymerase delta and polymerase epsilon for processive synthesis on the lagging and leading strand, respectively (By similarity).</text>
</comment>
<comment type="subunit">
    <text evidence="3 4">Component of the alpha DNA polymerase complex (also known as the alpha DNA polymerase-primase complex) consisting of four subunits: the catalytic subunit POLA1, the regulatory subunit POLA2, and the primase complex subunits PRIM1 and PRIM2 respectively (By similarity). Within the complex, POLA1 directly interacts with PRIM2 (By similarity).</text>
</comment>
<comment type="subcellular location">
    <subcellularLocation>
        <location evidence="1">Nucleus</location>
    </subcellularLocation>
</comment>
<comment type="domain">
    <text>The N-terminal 240 amino acids are sufficient to mediate complex formation.</text>
</comment>
<comment type="PTM">
    <text evidence="1">Phosphorylated in a cell cycle-dependent manner, in G2/M phase.</text>
</comment>
<comment type="similarity">
    <text evidence="6">Belongs to the DNA polymerase alpha subunit B family.</text>
</comment>
<keyword id="KW-0235">DNA replication</keyword>
<keyword id="KW-0539">Nucleus</keyword>
<keyword id="KW-0597">Phosphoprotein</keyword>
<keyword id="KW-1185">Reference proteome</keyword>
<gene>
    <name type="primary">POLA2</name>
</gene>
<feature type="chain" id="PRO_0000371218" description="DNA polymerase alpha subunit B">
    <location>
        <begin position="1"/>
        <end position="604"/>
    </location>
</feature>
<feature type="region of interest" description="Disordered" evidence="5">
    <location>
        <begin position="109"/>
        <end position="171"/>
    </location>
</feature>
<feature type="compositionally biased region" description="Polar residues" evidence="5">
    <location>
        <begin position="113"/>
        <end position="141"/>
    </location>
</feature>
<feature type="compositionally biased region" description="Low complexity" evidence="5">
    <location>
        <begin position="143"/>
        <end position="160"/>
    </location>
</feature>
<feature type="modified residue" description="Phosphothreonine" evidence="4">
    <location>
        <position position="129"/>
    </location>
</feature>
<feature type="modified residue" description="Phosphothreonine" evidence="4">
    <location>
        <position position="132"/>
    </location>
</feature>
<feature type="modified residue" description="Phosphoserine" evidence="4">
    <location>
        <position position="143"/>
    </location>
</feature>
<feature type="modified residue" description="Phosphoserine" evidence="4">
    <location>
        <position position="149"/>
    </location>
</feature>
<feature type="modified residue" description="Phosphoserine" evidence="4">
    <location>
        <position position="154"/>
    </location>
</feature>
<feature type="modified residue" description="Phosphoserine" evidence="4">
    <location>
        <position position="156"/>
    </location>
</feature>
<reference key="1">
    <citation type="journal article" date="2005" name="BMC Genomics">
        <title>Characterization of 954 bovine full-CDS cDNA sequences.</title>
        <authorList>
            <person name="Harhay G.P."/>
            <person name="Sonstegard T.S."/>
            <person name="Keele J.W."/>
            <person name="Heaton M.P."/>
            <person name="Clawson M.L."/>
            <person name="Snelling W.M."/>
            <person name="Wiedmann R.T."/>
            <person name="Van Tassell C.P."/>
            <person name="Smith T.P.L."/>
        </authorList>
    </citation>
    <scope>NUCLEOTIDE SEQUENCE [LARGE SCALE MRNA]</scope>
</reference>
<sequence>MAVSAQLLVEELQIFGLECEEAVIEKLVELCILYGQNEEGMASELIAFCTSTRKDCFTLETLNSFEHEFLSKRVSKTRHGASKDKGLRHAGARDIVSIQELIEVEEEEETLLNSYTTPSKGSQKRTITTPETPLTKRSVSARSPHQLLSPSSFSPSATPPQKYSSRSNRGEVVTSFGSAQGVSWSGRGGASPLSLKVLGHPEPLTGSYKYMFQKLPDIREVLTCKIEELGSELKEHYKIEAFAPILVPAQEPVTLLGQIGCDSNGKLNHKSVILEGDLEHSSGAQIPVDLSELKEYSLFPGQVVVMEGINTTGRKLVATRLYEGVPLPFHQPDEEDGDSEQFMVLVACGPYTTSDSITFDPLLDLITIINRDRPDVCILFGPFLDAKHEQVESCLLTSSFEDVFKQCLRTIIEGTRSSGSHLIIVPSLRDVHHEPVYPQPPFSCSDLLREDKKRVRLVSEPCTLSINGVIFGLTSTDLLFHMGAEEISSSSGTSDRFSRILRHILTQRSYYPLYPPQEDMAIDYENFYLYAQLPVTPDVFIAPSELRYFVKVGLNSAISLQCQNQFLSGALALNSSRVCWWGQWPRSFGGGVGVENKSVSIMLK</sequence>
<accession>Q58D13</accession>
<dbReference type="EMBL" id="BT021784">
    <property type="protein sequence ID" value="AAX46631.1"/>
    <property type="molecule type" value="mRNA"/>
</dbReference>
<dbReference type="RefSeq" id="NP_001019713.2">
    <property type="nucleotide sequence ID" value="NM_001024542.2"/>
</dbReference>
<dbReference type="SMR" id="Q58D13"/>
<dbReference type="CORUM" id="Q58D13"/>
<dbReference type="FunCoup" id="Q58D13">
    <property type="interactions" value="1516"/>
</dbReference>
<dbReference type="STRING" id="9913.ENSBTAP00000015221"/>
<dbReference type="BindingDB" id="Q58D13"/>
<dbReference type="ChEMBL" id="CHEMBL5259"/>
<dbReference type="PaxDb" id="9913-ENSBTAP00000015221"/>
<dbReference type="GeneID" id="514793"/>
<dbReference type="KEGG" id="bta:514793"/>
<dbReference type="CTD" id="23649"/>
<dbReference type="eggNOG" id="KOG1625">
    <property type="taxonomic scope" value="Eukaryota"/>
</dbReference>
<dbReference type="InParanoid" id="Q58D13"/>
<dbReference type="OrthoDB" id="336885at2759"/>
<dbReference type="PRO" id="PR:Q58D13"/>
<dbReference type="Proteomes" id="UP000009136">
    <property type="component" value="Unplaced"/>
</dbReference>
<dbReference type="GO" id="GO:0005658">
    <property type="term" value="C:alpha DNA polymerase:primase complex"/>
    <property type="evidence" value="ECO:0000250"/>
    <property type="project" value="UniProtKB"/>
</dbReference>
<dbReference type="GO" id="GO:0003677">
    <property type="term" value="F:DNA binding"/>
    <property type="evidence" value="ECO:0007669"/>
    <property type="project" value="InterPro"/>
</dbReference>
<dbReference type="GO" id="GO:0006270">
    <property type="term" value="P:DNA replication initiation"/>
    <property type="evidence" value="ECO:0000318"/>
    <property type="project" value="GO_Central"/>
</dbReference>
<dbReference type="FunFam" id="1.10.8.530:FF:000001">
    <property type="entry name" value="DNA polymerase alpha subunit B"/>
    <property type="match status" value="1"/>
</dbReference>
<dbReference type="FunFam" id="3.60.21.60:FF:000002">
    <property type="entry name" value="DNA polymerase alpha subunit B"/>
    <property type="match status" value="1"/>
</dbReference>
<dbReference type="Gene3D" id="3.60.21.60">
    <property type="match status" value="1"/>
</dbReference>
<dbReference type="Gene3D" id="1.10.8.530">
    <property type="entry name" value="DNA polymerase alpha-primase, subunit B, N-terminal domain"/>
    <property type="match status" value="1"/>
</dbReference>
<dbReference type="InterPro" id="IPR007185">
    <property type="entry name" value="DNA_pol_a/d/e_bsu"/>
</dbReference>
<dbReference type="InterPro" id="IPR043034">
    <property type="entry name" value="DNA_pol_alpha_B_N_sf"/>
</dbReference>
<dbReference type="InterPro" id="IPR016722">
    <property type="entry name" value="DNA_pol_alpha_bsu"/>
</dbReference>
<dbReference type="InterPro" id="IPR054300">
    <property type="entry name" value="DPOA2_OB"/>
</dbReference>
<dbReference type="InterPro" id="IPR013627">
    <property type="entry name" value="Pol_alpha_B_N"/>
</dbReference>
<dbReference type="PANTHER" id="PTHR23061">
    <property type="entry name" value="DNA POLYMERASE 2 ALPHA 70 KDA SUBUNIT"/>
    <property type="match status" value="1"/>
</dbReference>
<dbReference type="PANTHER" id="PTHR23061:SF12">
    <property type="entry name" value="DNA POLYMERASE ALPHA SUBUNIT B"/>
    <property type="match status" value="1"/>
</dbReference>
<dbReference type="Pfam" id="PF04042">
    <property type="entry name" value="DNA_pol_E_B"/>
    <property type="match status" value="1"/>
</dbReference>
<dbReference type="Pfam" id="PF22062">
    <property type="entry name" value="DPOA2_OB"/>
    <property type="match status" value="1"/>
</dbReference>
<dbReference type="Pfam" id="PF08418">
    <property type="entry name" value="Pol_alpha_B_N"/>
    <property type="match status" value="1"/>
</dbReference>
<dbReference type="PIRSF" id="PIRSF018300">
    <property type="entry name" value="DNA_pol_alph_2"/>
    <property type="match status" value="1"/>
</dbReference>
<organism>
    <name type="scientific">Bos taurus</name>
    <name type="common">Bovine</name>
    <dbReference type="NCBI Taxonomy" id="9913"/>
    <lineage>
        <taxon>Eukaryota</taxon>
        <taxon>Metazoa</taxon>
        <taxon>Chordata</taxon>
        <taxon>Craniata</taxon>
        <taxon>Vertebrata</taxon>
        <taxon>Euteleostomi</taxon>
        <taxon>Mammalia</taxon>
        <taxon>Eutheria</taxon>
        <taxon>Laurasiatheria</taxon>
        <taxon>Artiodactyla</taxon>
        <taxon>Ruminantia</taxon>
        <taxon>Pecora</taxon>
        <taxon>Bovidae</taxon>
        <taxon>Bovinae</taxon>
        <taxon>Bos</taxon>
    </lineage>
</organism>
<protein>
    <recommendedName>
        <fullName>DNA polymerase alpha subunit B</fullName>
    </recommendedName>
    <alternativeName>
        <fullName>DNA polymerase alpha 70 kDa subunit</fullName>
    </alternativeName>
</protein>
<name>DPOA2_BOVIN</name>
<proteinExistence type="evidence at transcript level"/>